<gene>
    <name type="primary">sipD</name>
    <name type="synonym">sspD</name>
    <name type="ordered locus">STY3006</name>
    <name type="ordered locus">t2785</name>
</gene>
<proteinExistence type="inferred from homology"/>
<reference key="1">
    <citation type="journal article" date="1995" name="Mol. Microbiol.">
        <title>Functional conservation of the Salmonella and Shigella effectors of entry into epithelial cells.</title>
        <authorList>
            <person name="Hermant D."/>
            <person name="Menard R."/>
            <person name="Arricau N."/>
            <person name="Parsot C."/>
            <person name="Popoff M.Y."/>
        </authorList>
    </citation>
    <scope>NUCLEOTIDE SEQUENCE [GENOMIC DNA]</scope>
    <source>
        <strain>ATCC 700931 / Ty2</strain>
    </source>
</reference>
<reference key="2">
    <citation type="journal article" date="2001" name="Nature">
        <title>Complete genome sequence of a multiple drug resistant Salmonella enterica serovar Typhi CT18.</title>
        <authorList>
            <person name="Parkhill J."/>
            <person name="Dougan G."/>
            <person name="James K.D."/>
            <person name="Thomson N.R."/>
            <person name="Pickard D."/>
            <person name="Wain J."/>
            <person name="Churcher C.M."/>
            <person name="Mungall K.L."/>
            <person name="Bentley S.D."/>
            <person name="Holden M.T.G."/>
            <person name="Sebaihia M."/>
            <person name="Baker S."/>
            <person name="Basham D."/>
            <person name="Brooks K."/>
            <person name="Chillingworth T."/>
            <person name="Connerton P."/>
            <person name="Cronin A."/>
            <person name="Davis P."/>
            <person name="Davies R.M."/>
            <person name="Dowd L."/>
            <person name="White N."/>
            <person name="Farrar J."/>
            <person name="Feltwell T."/>
            <person name="Hamlin N."/>
            <person name="Haque A."/>
            <person name="Hien T.T."/>
            <person name="Holroyd S."/>
            <person name="Jagels K."/>
            <person name="Krogh A."/>
            <person name="Larsen T.S."/>
            <person name="Leather S."/>
            <person name="Moule S."/>
            <person name="O'Gaora P."/>
            <person name="Parry C."/>
            <person name="Quail M.A."/>
            <person name="Rutherford K.M."/>
            <person name="Simmonds M."/>
            <person name="Skelton J."/>
            <person name="Stevens K."/>
            <person name="Whitehead S."/>
            <person name="Barrell B.G."/>
        </authorList>
    </citation>
    <scope>NUCLEOTIDE SEQUENCE [LARGE SCALE GENOMIC DNA]</scope>
    <source>
        <strain>CT18</strain>
    </source>
</reference>
<reference key="3">
    <citation type="journal article" date="2003" name="J. Bacteriol.">
        <title>Comparative genomics of Salmonella enterica serovar Typhi strains Ty2 and CT18.</title>
        <authorList>
            <person name="Deng W."/>
            <person name="Liou S.-R."/>
            <person name="Plunkett G. III"/>
            <person name="Mayhew G.F."/>
            <person name="Rose D.J."/>
            <person name="Burland V."/>
            <person name="Kodoyianni V."/>
            <person name="Schwartz D.C."/>
            <person name="Blattner F.R."/>
        </authorList>
    </citation>
    <scope>NUCLEOTIDE SEQUENCE [LARGE SCALE GENOMIC DNA]</scope>
    <source>
        <strain>ATCC 700931 / Ty2</strain>
    </source>
</reference>
<name>SIPD_SALTI</name>
<keyword id="KW-0175">Coiled coil</keyword>
<keyword id="KW-0964">Secreted</keyword>
<keyword id="KW-0843">Virulence</keyword>
<protein>
    <recommendedName>
        <fullName>Cell invasion protein SipD</fullName>
    </recommendedName>
    <alternativeName>
        <fullName>Salmonella invasion protein D</fullName>
    </alternativeName>
</protein>
<organism>
    <name type="scientific">Salmonella typhi</name>
    <dbReference type="NCBI Taxonomy" id="90370"/>
    <lineage>
        <taxon>Bacteria</taxon>
        <taxon>Pseudomonadati</taxon>
        <taxon>Pseudomonadota</taxon>
        <taxon>Gammaproteobacteria</taxon>
        <taxon>Enterobacterales</taxon>
        <taxon>Enterobacteriaceae</taxon>
        <taxon>Salmonella</taxon>
    </lineage>
</organism>
<accession>Q56136</accession>
<accession>Q7C7N3</accession>
<accession>Q8Z493</accession>
<feature type="chain" id="PRO_0000219864" description="Cell invasion protein SipD">
    <location>
        <begin position="1"/>
        <end position="340"/>
    </location>
</feature>
<feature type="region of interest" description="Disordered" evidence="3">
    <location>
        <begin position="1"/>
        <end position="26"/>
    </location>
</feature>
<feature type="region of interest" description="Disordered" evidence="3">
    <location>
        <begin position="57"/>
        <end position="76"/>
    </location>
</feature>
<feature type="coiled-coil region" evidence="2">
    <location>
        <begin position="291"/>
        <end position="319"/>
    </location>
</feature>
<dbReference type="EMBL" id="X82670">
    <property type="protein sequence ID" value="CAA57990.1"/>
    <property type="status" value="ALT_FRAME"/>
    <property type="molecule type" value="Genomic_DNA"/>
</dbReference>
<dbReference type="EMBL" id="AL513382">
    <property type="protein sequence ID" value="CAD05990.1"/>
    <property type="molecule type" value="Genomic_DNA"/>
</dbReference>
<dbReference type="EMBL" id="AE014613">
    <property type="protein sequence ID" value="AAO70346.1"/>
    <property type="molecule type" value="Genomic_DNA"/>
</dbReference>
<dbReference type="PIR" id="S70218">
    <property type="entry name" value="S70218"/>
</dbReference>
<dbReference type="RefSeq" id="NP_457277.1">
    <property type="nucleotide sequence ID" value="NC_003198.1"/>
</dbReference>
<dbReference type="RefSeq" id="WP_000932243.1">
    <property type="nucleotide sequence ID" value="NZ_WSUR01000005.1"/>
</dbReference>
<dbReference type="SMR" id="Q56136"/>
<dbReference type="STRING" id="220341.gene:17586900"/>
<dbReference type="KEGG" id="stt:t2785"/>
<dbReference type="KEGG" id="sty:STY3006"/>
<dbReference type="PATRIC" id="fig|220341.7.peg.3060"/>
<dbReference type="eggNOG" id="ENOG5032RHE">
    <property type="taxonomic scope" value="Bacteria"/>
</dbReference>
<dbReference type="HOGENOM" id="CLU_069613_0_0_6"/>
<dbReference type="OMA" id="QMANWIK"/>
<dbReference type="OrthoDB" id="6507315at2"/>
<dbReference type="Proteomes" id="UP000000541">
    <property type="component" value="Chromosome"/>
</dbReference>
<dbReference type="Proteomes" id="UP000002670">
    <property type="component" value="Chromosome"/>
</dbReference>
<dbReference type="GO" id="GO:0005576">
    <property type="term" value="C:extracellular region"/>
    <property type="evidence" value="ECO:0007669"/>
    <property type="project" value="UniProtKB-SubCell"/>
</dbReference>
<dbReference type="Gene3D" id="1.20.1710.10">
    <property type="entry name" value="IpaD-like"/>
    <property type="match status" value="1"/>
</dbReference>
<dbReference type="InterPro" id="IPR036708">
    <property type="entry name" value="BipD-like_sf"/>
</dbReference>
<dbReference type="InterPro" id="IPR009483">
    <property type="entry name" value="IpaD/BipD/SipD"/>
</dbReference>
<dbReference type="NCBIfam" id="NF011858">
    <property type="entry name" value="PRK15330.1"/>
    <property type="match status" value="1"/>
</dbReference>
<dbReference type="NCBIfam" id="TIGR02553">
    <property type="entry name" value="SipD_IpaD_SspD"/>
    <property type="match status" value="1"/>
</dbReference>
<dbReference type="Pfam" id="PF06511">
    <property type="entry name" value="T3SS_TC"/>
    <property type="match status" value="1"/>
</dbReference>
<dbReference type="SUPFAM" id="SSF140693">
    <property type="entry name" value="IpaD-like"/>
    <property type="match status" value="1"/>
</dbReference>
<comment type="function">
    <text evidence="1">Required for translocation of effector proteins via the type III secretion system SPI-1, which is essential for an efficient bacterial internalization. Probably acts by modulating the secretion of SipA, SipB, and SipC (By similarity).</text>
</comment>
<comment type="subcellular location">
    <subcellularLocation>
        <location evidence="1">Secreted</location>
    </subcellularLocation>
    <text evidence="1">Secreted via the type III secretion system 1 (SPI-1 T3SS).</text>
</comment>
<comment type="domain">
    <text evidence="1">The N-terminal domain is an intra-molecular chaperone that prevents premature oligomerization of the residues on the coiled-coil region that are involved in interactions with the needle and/or itself. The residues in the C-terminal domain probably form oligomeric structures at the tip of the needle that are responsible for the regulation of secretion of other effectors (By similarity).</text>
</comment>
<comment type="similarity">
    <text evidence="4">Belongs to the invasin protein D family.</text>
</comment>
<comment type="sequence caution" evidence="4">
    <conflict type="frameshift">
        <sequence resource="EMBL-CDS" id="CAA57990"/>
    </conflict>
</comment>
<evidence type="ECO:0000250" key="1"/>
<evidence type="ECO:0000255" key="2"/>
<evidence type="ECO:0000256" key="3">
    <source>
        <dbReference type="SAM" id="MobiDB-lite"/>
    </source>
</evidence>
<evidence type="ECO:0000305" key="4"/>
<sequence length="340" mass="36549">MLNIQNYSASPHPGIVAERPQTPSASEHAEIAVVPSTTEHRGTDIISLSQAATKIQQAQQTLQSTPPISEENNDERTLARQQLTSSLNALAKSGVSLSAEQNENLRSTFSAPTSALFSASPMAQPRTTISDAEIWDMVSQNISAIGDSYLGVYENVVAVYTDFYQAFSDILSKMGGWLSPGKDGNTIKLNVDSLKSEISSLINKYTQINKNTILFPSQTGSGMTTATKAEAEQWIKELNLPDSCLKASGSGYVVLVDTGPLSKMVSDLNGIGSGSALELDNAKYQAWQSGFKAQEENLKTTLQTLTQKYSNANSLYDNLVKVLSSTISSSLETAKSFLQG</sequence>